<gene>
    <name type="primary">pabB</name>
</gene>
<proteinExistence type="inferred from homology"/>
<organism>
    <name type="scientific">Streptomyces lividans</name>
    <dbReference type="NCBI Taxonomy" id="1916"/>
    <lineage>
        <taxon>Bacteria</taxon>
        <taxon>Bacillati</taxon>
        <taxon>Actinomycetota</taxon>
        <taxon>Actinomycetes</taxon>
        <taxon>Kitasatosporales</taxon>
        <taxon>Streptomycetaceae</taxon>
        <taxon>Streptomyces</taxon>
    </lineage>
</organism>
<name>PABB_STRLI</name>
<comment type="function">
    <text evidence="1">Part of a heterodimeric complex that catalyzes the two-step biosynthesis of 4-amino-4-deoxychorismate (ADC), a precursor of p-aminobenzoate (PABA) and tetrahydrofolate. In the first step, a glutamine amidotransferase (PabA) generates ammonia as a substrate that, along with chorismate, is used in the second step, catalyzed by aminodeoxychorismate synthase (PabB) to produce ADC (By similarity).</text>
</comment>
<comment type="catalytic activity">
    <reaction>
        <text>chorismate + L-glutamine = 4-amino-4-deoxychorismate + L-glutamate</text>
        <dbReference type="Rhea" id="RHEA:11672"/>
        <dbReference type="ChEBI" id="CHEBI:29748"/>
        <dbReference type="ChEBI" id="CHEBI:29985"/>
        <dbReference type="ChEBI" id="CHEBI:58359"/>
        <dbReference type="ChEBI" id="CHEBI:58406"/>
        <dbReference type="EC" id="2.6.1.85"/>
    </reaction>
</comment>
<comment type="cofactor">
    <cofactor evidence="1">
        <name>Mg(2+)</name>
        <dbReference type="ChEBI" id="CHEBI:18420"/>
    </cofactor>
</comment>
<comment type="pathway">
    <text>Cofactor biosynthesis; tetrahydrofolate biosynthesis; 4-aminobenzoate from chorismate: step 1/2.</text>
</comment>
<comment type="subunit">
    <text evidence="1">Monomer. Heterodimer consisting of two non-identical subunits: a glutamine amidotransferase subunit (PabA) and a aminodeoxychorismate synthase subunit (PabB) (By similarity).</text>
</comment>
<comment type="miscellaneous">
    <text>The catalytically active amino acid residue K274 of the E.coli enzyme is missing.</text>
</comment>
<comment type="similarity">
    <text evidence="2">Belongs to the anthranilate synthase component I family.</text>
</comment>
<feature type="chain" id="PRO_0000154140" description="Aminodeoxychorismate synthase component 1">
    <location>
        <begin position="1"/>
        <end position="475"/>
    </location>
</feature>
<sequence>MASCRMGARSALEPCQVDCLDEAADERCAETPRCHAELLESVTGASRMSRYSIIVLDPIGTIRAAEALTALVDADDVIFKDEDPLKGIRSVFELGDLDPTNHEEIEFQGGALGRFAYDIARRLEAIRDLGDRELAGPDAGTALYDLILYDHQDDVIWILVPNEAGEQDPSEDFRDLVNAWSYDDEFDIGAEFGANYTDDAYADGVDRLKDYLGSGDMYQVNLAQRRVGMISAEDYQLYIRLRDANPAPYMAYLDIDEGLLVASPERIILDEASDLDTRPIAGTLRGRPRAGGDDEDDGRAIDLLRVDKDRAERIMIVDLDRNDIARVGVGGSVKVREIMGLERYSGVMHLVSQVTGDLQEAIEAVDLIRAGFPGGTLTGAPKVRTMEIIDELEPQRRAAYCGSIGYIAYKGNIDFKIAIPTLYALAGQLFCQAGGGVVGDSVPDGEYRESFEKGNALIRGLEIRHGAVVAQSEDK</sequence>
<dbReference type="EC" id="2.6.1.85"/>
<dbReference type="EMBL" id="M64859">
    <property type="protein sequence ID" value="AAA26798.1"/>
    <property type="molecule type" value="Genomic_DNA"/>
</dbReference>
<dbReference type="PIR" id="JN0578">
    <property type="entry name" value="JN0578"/>
</dbReference>
<dbReference type="SMR" id="P27630"/>
<dbReference type="UniPathway" id="UPA00077">
    <property type="reaction ID" value="UER00149"/>
</dbReference>
<dbReference type="GO" id="GO:0046820">
    <property type="term" value="F:4-amino-4-deoxychorismate synthase activity"/>
    <property type="evidence" value="ECO:0000250"/>
    <property type="project" value="UniProtKB"/>
</dbReference>
<dbReference type="GO" id="GO:0000287">
    <property type="term" value="F:magnesium ion binding"/>
    <property type="evidence" value="ECO:0000250"/>
    <property type="project" value="UniProtKB"/>
</dbReference>
<dbReference type="GO" id="GO:0046656">
    <property type="term" value="P:folic acid biosynthetic process"/>
    <property type="evidence" value="ECO:0007669"/>
    <property type="project" value="UniProtKB-KW"/>
</dbReference>
<dbReference type="GO" id="GO:0000162">
    <property type="term" value="P:L-tryptophan biosynthetic process"/>
    <property type="evidence" value="ECO:0007669"/>
    <property type="project" value="TreeGrafter"/>
</dbReference>
<dbReference type="GO" id="GO:0046654">
    <property type="term" value="P:tetrahydrofolate biosynthetic process"/>
    <property type="evidence" value="ECO:0000250"/>
    <property type="project" value="UniProtKB"/>
</dbReference>
<dbReference type="FunFam" id="3.60.120.10:FF:000004">
    <property type="entry name" value="Aminodeoxychorismate synthase, component I"/>
    <property type="match status" value="1"/>
</dbReference>
<dbReference type="Gene3D" id="3.60.120.10">
    <property type="entry name" value="Anthranilate synthase"/>
    <property type="match status" value="1"/>
</dbReference>
<dbReference type="InterPro" id="IPR005801">
    <property type="entry name" value="ADC_synthase"/>
</dbReference>
<dbReference type="InterPro" id="IPR019999">
    <property type="entry name" value="Anth_synth_I-like"/>
</dbReference>
<dbReference type="InterPro" id="IPR006805">
    <property type="entry name" value="Anth_synth_I_N"/>
</dbReference>
<dbReference type="InterPro" id="IPR015890">
    <property type="entry name" value="Chorismate_C"/>
</dbReference>
<dbReference type="PANTHER" id="PTHR11236">
    <property type="entry name" value="AMINOBENZOATE/ANTHRANILATE SYNTHASE"/>
    <property type="match status" value="1"/>
</dbReference>
<dbReference type="PANTHER" id="PTHR11236:SF41">
    <property type="entry name" value="AMINODEOXYCHORISMATE SYNTHASE COMPONENT 1"/>
    <property type="match status" value="1"/>
</dbReference>
<dbReference type="Pfam" id="PF04715">
    <property type="entry name" value="Anth_synt_I_N"/>
    <property type="match status" value="1"/>
</dbReference>
<dbReference type="Pfam" id="PF00425">
    <property type="entry name" value="Chorismate_bind"/>
    <property type="match status" value="1"/>
</dbReference>
<dbReference type="PRINTS" id="PR00095">
    <property type="entry name" value="ANTSNTHASEI"/>
</dbReference>
<dbReference type="SUPFAM" id="SSF56322">
    <property type="entry name" value="ADC synthase"/>
    <property type="match status" value="1"/>
</dbReference>
<reference key="1">
    <citation type="journal article" date="1993" name="Gene">
        <title>Organization of the genes encoding p-aminobenzoic acid synthetase from Streptomyces lividans 1326.</title>
        <authorList>
            <person name="Arhin F.F."/>
            <person name="Vining L.C."/>
        </authorList>
    </citation>
    <scope>NUCLEOTIDE SEQUENCE [GENOMIC DNA]</scope>
    <source>
        <strain>66 / 1326</strain>
    </source>
</reference>
<evidence type="ECO:0000250" key="1"/>
<evidence type="ECO:0000305" key="2"/>
<accession>P27630</accession>
<keyword id="KW-0289">Folate biosynthesis</keyword>
<keyword id="KW-0460">Magnesium</keyword>
<keyword id="KW-0808">Transferase</keyword>
<protein>
    <recommendedName>
        <fullName>Aminodeoxychorismate synthase component 1</fullName>
        <shortName>ADC synthase</shortName>
        <shortName>ADCS</shortName>
        <ecNumber>2.6.1.85</ecNumber>
    </recommendedName>
    <alternativeName>
        <fullName>4-amino-4-deoxychorismate synthase component 1</fullName>
    </alternativeName>
</protein>